<name>PDXT_BACAH</name>
<protein>
    <recommendedName>
        <fullName evidence="1">Pyridoxal 5'-phosphate synthase subunit PdxT</fullName>
        <ecNumber evidence="1">4.3.3.6</ecNumber>
    </recommendedName>
    <alternativeName>
        <fullName evidence="1">Pdx2</fullName>
    </alternativeName>
    <alternativeName>
        <fullName evidence="1">Pyridoxal 5'-phosphate synthase glutaminase subunit</fullName>
        <ecNumber evidence="1">3.5.1.2</ecNumber>
    </alternativeName>
</protein>
<reference key="1">
    <citation type="journal article" date="2007" name="J. Bacteriol.">
        <title>The complete genome sequence of Bacillus thuringiensis Al Hakam.</title>
        <authorList>
            <person name="Challacombe J.F."/>
            <person name="Altherr M.R."/>
            <person name="Xie G."/>
            <person name="Bhotika S.S."/>
            <person name="Brown N."/>
            <person name="Bruce D."/>
            <person name="Campbell C.S."/>
            <person name="Campbell M.L."/>
            <person name="Chen J."/>
            <person name="Chertkov O."/>
            <person name="Cleland C."/>
            <person name="Dimitrijevic M."/>
            <person name="Doggett N.A."/>
            <person name="Fawcett J.J."/>
            <person name="Glavina T."/>
            <person name="Goodwin L.A."/>
            <person name="Green L.D."/>
            <person name="Han C.S."/>
            <person name="Hill K.K."/>
            <person name="Hitchcock P."/>
            <person name="Jackson P.J."/>
            <person name="Keim P."/>
            <person name="Kewalramani A.R."/>
            <person name="Longmire J."/>
            <person name="Lucas S."/>
            <person name="Malfatti S."/>
            <person name="Martinez D."/>
            <person name="McMurry K."/>
            <person name="Meincke L.J."/>
            <person name="Misra M."/>
            <person name="Moseman B.L."/>
            <person name="Mundt M."/>
            <person name="Munk A.C."/>
            <person name="Okinaka R.T."/>
            <person name="Parson-Quintana B."/>
            <person name="Reilly L.P."/>
            <person name="Richardson P."/>
            <person name="Robinson D.L."/>
            <person name="Saunders E."/>
            <person name="Tapia R."/>
            <person name="Tesmer J.G."/>
            <person name="Thayer N."/>
            <person name="Thompson L.S."/>
            <person name="Tice H."/>
            <person name="Ticknor L.O."/>
            <person name="Wills P.L."/>
            <person name="Gilna P."/>
            <person name="Brettin T.S."/>
        </authorList>
    </citation>
    <scope>NUCLEOTIDE SEQUENCE [LARGE SCALE GENOMIC DNA]</scope>
    <source>
        <strain>Al Hakam</strain>
    </source>
</reference>
<comment type="function">
    <text evidence="1">Catalyzes the hydrolysis of glutamine to glutamate and ammonia as part of the biosynthesis of pyridoxal 5'-phosphate. The resulting ammonia molecule is channeled to the active site of PdxS.</text>
</comment>
<comment type="catalytic activity">
    <reaction evidence="1">
        <text>aldehydo-D-ribose 5-phosphate + D-glyceraldehyde 3-phosphate + L-glutamine = pyridoxal 5'-phosphate + L-glutamate + phosphate + 3 H2O + H(+)</text>
        <dbReference type="Rhea" id="RHEA:31507"/>
        <dbReference type="ChEBI" id="CHEBI:15377"/>
        <dbReference type="ChEBI" id="CHEBI:15378"/>
        <dbReference type="ChEBI" id="CHEBI:29985"/>
        <dbReference type="ChEBI" id="CHEBI:43474"/>
        <dbReference type="ChEBI" id="CHEBI:58273"/>
        <dbReference type="ChEBI" id="CHEBI:58359"/>
        <dbReference type="ChEBI" id="CHEBI:59776"/>
        <dbReference type="ChEBI" id="CHEBI:597326"/>
        <dbReference type="EC" id="4.3.3.6"/>
    </reaction>
</comment>
<comment type="catalytic activity">
    <reaction evidence="1">
        <text>L-glutamine + H2O = L-glutamate + NH4(+)</text>
        <dbReference type="Rhea" id="RHEA:15889"/>
        <dbReference type="ChEBI" id="CHEBI:15377"/>
        <dbReference type="ChEBI" id="CHEBI:28938"/>
        <dbReference type="ChEBI" id="CHEBI:29985"/>
        <dbReference type="ChEBI" id="CHEBI:58359"/>
        <dbReference type="EC" id="3.5.1.2"/>
    </reaction>
</comment>
<comment type="pathway">
    <text evidence="1">Cofactor biosynthesis; pyridoxal 5'-phosphate biosynthesis.</text>
</comment>
<comment type="subunit">
    <text evidence="1">In the presence of PdxS, forms a dodecamer of heterodimers. Only shows activity in the heterodimer.</text>
</comment>
<comment type="similarity">
    <text evidence="1">Belongs to the glutaminase PdxT/SNO family.</text>
</comment>
<keyword id="KW-0315">Glutamine amidotransferase</keyword>
<keyword id="KW-0378">Hydrolase</keyword>
<keyword id="KW-0456">Lyase</keyword>
<keyword id="KW-0663">Pyridoxal phosphate</keyword>
<proteinExistence type="inferred from homology"/>
<gene>
    <name evidence="1" type="primary">pdxT</name>
    <name type="ordered locus">BALH_0012</name>
</gene>
<accession>A0R890</accession>
<organism>
    <name type="scientific">Bacillus thuringiensis (strain Al Hakam)</name>
    <dbReference type="NCBI Taxonomy" id="412694"/>
    <lineage>
        <taxon>Bacteria</taxon>
        <taxon>Bacillati</taxon>
        <taxon>Bacillota</taxon>
        <taxon>Bacilli</taxon>
        <taxon>Bacillales</taxon>
        <taxon>Bacillaceae</taxon>
        <taxon>Bacillus</taxon>
        <taxon>Bacillus cereus group</taxon>
    </lineage>
</organism>
<sequence length="196" mass="21460">MVKIGVLGLQGAVREHVKSVEASGAEAVVVKRIEQLEEIDGLILPGGESTTMRRLIDKYDFMEPLRTFAKSGKPMFGTCAGMILLAKTLIGYDEAHIGAMDITVERNAFGRQKDSFEAALSIKGVGEDFVGVFIRAPYVVDVADDVEVLSTHGDRMVAVRQGPFLAASFHPELTDDHRVTAYFVEMVKEAKMKKVV</sequence>
<feature type="chain" id="PRO_0000292993" description="Pyridoxal 5'-phosphate synthase subunit PdxT">
    <location>
        <begin position="1"/>
        <end position="196"/>
    </location>
</feature>
<feature type="active site" description="Nucleophile" evidence="1">
    <location>
        <position position="79"/>
    </location>
</feature>
<feature type="active site" description="Charge relay system" evidence="1">
    <location>
        <position position="170"/>
    </location>
</feature>
<feature type="active site" description="Charge relay system" evidence="1">
    <location>
        <position position="172"/>
    </location>
</feature>
<feature type="binding site" evidence="1">
    <location>
        <begin position="47"/>
        <end position="49"/>
    </location>
    <ligand>
        <name>L-glutamine</name>
        <dbReference type="ChEBI" id="CHEBI:58359"/>
    </ligand>
</feature>
<feature type="binding site" evidence="1">
    <location>
        <position position="106"/>
    </location>
    <ligand>
        <name>L-glutamine</name>
        <dbReference type="ChEBI" id="CHEBI:58359"/>
    </ligand>
</feature>
<feature type="binding site" evidence="1">
    <location>
        <begin position="134"/>
        <end position="135"/>
    </location>
    <ligand>
        <name>L-glutamine</name>
        <dbReference type="ChEBI" id="CHEBI:58359"/>
    </ligand>
</feature>
<evidence type="ECO:0000255" key="1">
    <source>
        <dbReference type="HAMAP-Rule" id="MF_01615"/>
    </source>
</evidence>
<dbReference type="EC" id="4.3.3.6" evidence="1"/>
<dbReference type="EC" id="3.5.1.2" evidence="1"/>
<dbReference type="EMBL" id="CP000485">
    <property type="protein sequence ID" value="ABK83433.1"/>
    <property type="molecule type" value="Genomic_DNA"/>
</dbReference>
<dbReference type="RefSeq" id="WP_000238799.1">
    <property type="nucleotide sequence ID" value="NC_008600.1"/>
</dbReference>
<dbReference type="SMR" id="A0R890"/>
<dbReference type="MEROPS" id="C26.A32"/>
<dbReference type="KEGG" id="btl:BALH_0012"/>
<dbReference type="HOGENOM" id="CLU_069674_2_0_9"/>
<dbReference type="UniPathway" id="UPA00245"/>
<dbReference type="GO" id="GO:0005829">
    <property type="term" value="C:cytosol"/>
    <property type="evidence" value="ECO:0007669"/>
    <property type="project" value="TreeGrafter"/>
</dbReference>
<dbReference type="GO" id="GO:1903600">
    <property type="term" value="C:glutaminase complex"/>
    <property type="evidence" value="ECO:0007669"/>
    <property type="project" value="TreeGrafter"/>
</dbReference>
<dbReference type="GO" id="GO:0004359">
    <property type="term" value="F:glutaminase activity"/>
    <property type="evidence" value="ECO:0007669"/>
    <property type="project" value="UniProtKB-UniRule"/>
</dbReference>
<dbReference type="GO" id="GO:0036381">
    <property type="term" value="F:pyridoxal 5'-phosphate synthase (glutamine hydrolysing) activity"/>
    <property type="evidence" value="ECO:0007669"/>
    <property type="project" value="UniProtKB-UniRule"/>
</dbReference>
<dbReference type="GO" id="GO:0006543">
    <property type="term" value="P:glutamine catabolic process"/>
    <property type="evidence" value="ECO:0007669"/>
    <property type="project" value="UniProtKB-UniRule"/>
</dbReference>
<dbReference type="GO" id="GO:0042823">
    <property type="term" value="P:pyridoxal phosphate biosynthetic process"/>
    <property type="evidence" value="ECO:0007669"/>
    <property type="project" value="UniProtKB-UniRule"/>
</dbReference>
<dbReference type="GO" id="GO:0008614">
    <property type="term" value="P:pyridoxine metabolic process"/>
    <property type="evidence" value="ECO:0007669"/>
    <property type="project" value="TreeGrafter"/>
</dbReference>
<dbReference type="CDD" id="cd01749">
    <property type="entry name" value="GATase1_PB"/>
    <property type="match status" value="1"/>
</dbReference>
<dbReference type="FunFam" id="3.40.50.880:FF:000010">
    <property type="entry name" value="uncharacterized protein LOC100176842 isoform X2"/>
    <property type="match status" value="1"/>
</dbReference>
<dbReference type="Gene3D" id="3.40.50.880">
    <property type="match status" value="1"/>
</dbReference>
<dbReference type="HAMAP" id="MF_01615">
    <property type="entry name" value="PdxT"/>
    <property type="match status" value="1"/>
</dbReference>
<dbReference type="InterPro" id="IPR029062">
    <property type="entry name" value="Class_I_gatase-like"/>
</dbReference>
<dbReference type="InterPro" id="IPR002161">
    <property type="entry name" value="PdxT/SNO"/>
</dbReference>
<dbReference type="InterPro" id="IPR021196">
    <property type="entry name" value="PdxT/SNO_CS"/>
</dbReference>
<dbReference type="NCBIfam" id="TIGR03800">
    <property type="entry name" value="PLP_synth_Pdx2"/>
    <property type="match status" value="1"/>
</dbReference>
<dbReference type="PANTHER" id="PTHR31559">
    <property type="entry name" value="PYRIDOXAL 5'-PHOSPHATE SYNTHASE SUBUNIT SNO"/>
    <property type="match status" value="1"/>
</dbReference>
<dbReference type="PANTHER" id="PTHR31559:SF0">
    <property type="entry name" value="PYRIDOXAL 5'-PHOSPHATE SYNTHASE SUBUNIT SNO1-RELATED"/>
    <property type="match status" value="1"/>
</dbReference>
<dbReference type="Pfam" id="PF01174">
    <property type="entry name" value="SNO"/>
    <property type="match status" value="1"/>
</dbReference>
<dbReference type="PIRSF" id="PIRSF005639">
    <property type="entry name" value="Glut_amidoT_SNO"/>
    <property type="match status" value="1"/>
</dbReference>
<dbReference type="SUPFAM" id="SSF52317">
    <property type="entry name" value="Class I glutamine amidotransferase-like"/>
    <property type="match status" value="1"/>
</dbReference>
<dbReference type="PROSITE" id="PS01236">
    <property type="entry name" value="PDXT_SNO_1"/>
    <property type="match status" value="1"/>
</dbReference>
<dbReference type="PROSITE" id="PS51130">
    <property type="entry name" value="PDXT_SNO_2"/>
    <property type="match status" value="1"/>
</dbReference>